<keyword id="KW-0903">Direct protein sequencing</keyword>
<keyword id="KW-0325">Glycoprotein</keyword>
<keyword id="KW-0597">Phosphoprotein</keyword>
<keyword id="KW-0646">Protease inhibitor</keyword>
<keyword id="KW-1185">Reference proteome</keyword>
<keyword id="KW-0964">Secreted</keyword>
<keyword id="KW-0722">Serine protease inhibitor</keyword>
<keyword id="KW-0732">Signal</keyword>
<reference key="1">
    <citation type="journal article" date="1989" name="Nucleic Acids Res.">
        <title>Nucleotide and deduced amino acid sequence of sheep alpha 1 antitrypsin.</title>
        <authorList>
            <person name="Brown W.M."/>
            <person name="Dziegielewska K.D."/>
            <person name="Foreman R.C."/>
            <person name="Saunders N.R."/>
            <person name="Wu Y."/>
        </authorList>
    </citation>
    <scope>NUCLEOTIDE SEQUENCE [MRNA]</scope>
    <source>
        <tissue>Liver</tissue>
    </source>
</reference>
<reference key="2">
    <citation type="journal article" date="1991" name="Biochem. J.">
        <title>Isolation and characterization of sheep alpha 1-proteinase inhibitor.</title>
        <authorList>
            <person name="Mistry R."/>
            <person name="Snashall P.D."/>
            <person name="Totty N."/>
            <person name="Guz A."/>
            <person name="Tetley T.D."/>
        </authorList>
    </citation>
    <scope>PROTEIN SEQUENCE OF 25-55</scope>
    <source>
        <tissue>Plasma</tissue>
    </source>
</reference>
<evidence type="ECO:0000250" key="1"/>
<evidence type="ECO:0000250" key="2">
    <source>
        <dbReference type="UniProtKB" id="P01009"/>
    </source>
</evidence>
<evidence type="ECO:0000255" key="3"/>
<evidence type="ECO:0000269" key="4">
    <source>
    </source>
</evidence>
<evidence type="ECO:0000305" key="5"/>
<dbReference type="EMBL" id="X15555">
    <property type="protein sequence ID" value="CAA33561.1"/>
    <property type="molecule type" value="mRNA"/>
</dbReference>
<dbReference type="PIR" id="S05312">
    <property type="entry name" value="ITSH"/>
</dbReference>
<dbReference type="RefSeq" id="NP_001009799.1">
    <property type="nucleotide sequence ID" value="NM_001009799.2"/>
</dbReference>
<dbReference type="SMR" id="P12725"/>
<dbReference type="STRING" id="9940.ENSOARP00000015963"/>
<dbReference type="MEROPS" id="I04.001"/>
<dbReference type="PaxDb" id="9940-ENSOARP00000015963"/>
<dbReference type="GeneID" id="443388"/>
<dbReference type="KEGG" id="oas:443388"/>
<dbReference type="CTD" id="5265"/>
<dbReference type="eggNOG" id="KOG2392">
    <property type="taxonomic scope" value="Eukaryota"/>
</dbReference>
<dbReference type="OrthoDB" id="671595at2759"/>
<dbReference type="Proteomes" id="UP000002356">
    <property type="component" value="Unplaced"/>
</dbReference>
<dbReference type="GO" id="GO:0005615">
    <property type="term" value="C:extracellular space"/>
    <property type="evidence" value="ECO:0007669"/>
    <property type="project" value="InterPro"/>
</dbReference>
<dbReference type="GO" id="GO:0004867">
    <property type="term" value="F:serine-type endopeptidase inhibitor activity"/>
    <property type="evidence" value="ECO:0007669"/>
    <property type="project" value="UniProtKB-KW"/>
</dbReference>
<dbReference type="CDD" id="cd02056">
    <property type="entry name" value="serpinA1_A1AT"/>
    <property type="match status" value="1"/>
</dbReference>
<dbReference type="FunFam" id="2.30.39.10:FF:000003">
    <property type="entry name" value="alpha-1-antitrypsin isoform X1"/>
    <property type="match status" value="1"/>
</dbReference>
<dbReference type="FunFam" id="3.30.497.10:FF:000001">
    <property type="entry name" value="Serine protease inhibitor"/>
    <property type="match status" value="1"/>
</dbReference>
<dbReference type="FunFam" id="2.10.310.10:FF:000001">
    <property type="entry name" value="Serpin family A member 1"/>
    <property type="match status" value="1"/>
</dbReference>
<dbReference type="Gene3D" id="2.30.39.10">
    <property type="entry name" value="Alpha-1-antitrypsin, domain 1"/>
    <property type="match status" value="1"/>
</dbReference>
<dbReference type="Gene3D" id="3.30.497.10">
    <property type="entry name" value="Antithrombin, subunit I, domain 2"/>
    <property type="match status" value="1"/>
</dbReference>
<dbReference type="Gene3D" id="2.10.310.10">
    <property type="entry name" value="Serpins superfamily"/>
    <property type="match status" value="1"/>
</dbReference>
<dbReference type="InterPro" id="IPR023795">
    <property type="entry name" value="Serpin_CS"/>
</dbReference>
<dbReference type="InterPro" id="IPR023796">
    <property type="entry name" value="Serpin_dom"/>
</dbReference>
<dbReference type="InterPro" id="IPR000215">
    <property type="entry name" value="Serpin_fam"/>
</dbReference>
<dbReference type="InterPro" id="IPR036186">
    <property type="entry name" value="Serpin_sf"/>
</dbReference>
<dbReference type="InterPro" id="IPR042178">
    <property type="entry name" value="Serpin_sf_1"/>
</dbReference>
<dbReference type="InterPro" id="IPR042185">
    <property type="entry name" value="Serpin_sf_2"/>
</dbReference>
<dbReference type="PANTHER" id="PTHR11461:SF165">
    <property type="entry name" value="ALPHA-1-ANTITRYPSIN"/>
    <property type="match status" value="1"/>
</dbReference>
<dbReference type="PANTHER" id="PTHR11461">
    <property type="entry name" value="SERINE PROTEASE INHIBITOR, SERPIN"/>
    <property type="match status" value="1"/>
</dbReference>
<dbReference type="Pfam" id="PF00079">
    <property type="entry name" value="Serpin"/>
    <property type="match status" value="1"/>
</dbReference>
<dbReference type="SMART" id="SM00093">
    <property type="entry name" value="SERPIN"/>
    <property type="match status" value="1"/>
</dbReference>
<dbReference type="SUPFAM" id="SSF56574">
    <property type="entry name" value="Serpins"/>
    <property type="match status" value="1"/>
</dbReference>
<dbReference type="PROSITE" id="PS00284">
    <property type="entry name" value="SERPIN"/>
    <property type="match status" value="1"/>
</dbReference>
<proteinExistence type="evidence at protein level"/>
<comment type="function">
    <text>Inhibits human leukocyte elastase, pig pancreatic elastase and bovine trypsin on a 1:1 molar basis.</text>
</comment>
<comment type="subunit">
    <text evidence="2">Interacts with CELA2A (By similarity). Interacts with ERGIC3 and LMAN1/ERGIC53 (By similarity). Interacts with PRSS1/Trypsin (By similarity).</text>
</comment>
<comment type="subcellular location">
    <subcellularLocation>
        <location>Secreted</location>
    </subcellularLocation>
</comment>
<comment type="tissue specificity">
    <text>Plasma.</text>
</comment>
<comment type="domain">
    <text evidence="1">The reactive center loop (RCL) extends out from the body of the protein and directs binding to the target protease. The protease cleaves the serpin at the reactive site within the RCL, establishing a covalent linkage between the carboxyl group of the serpin reactive site and the serine hydroxyl of the protease. The resulting inactive serpin-protease complex is highly stable (By similarity).</text>
</comment>
<comment type="similarity">
    <text evidence="5">Belongs to the serpin family.</text>
</comment>
<protein>
    <recommendedName>
        <fullName>Alpha-1-antiproteinase</fullName>
    </recommendedName>
    <alternativeName>
        <fullName>Alpha-1-antitrypsin</fullName>
    </alternativeName>
    <alternativeName>
        <fullName>Alpha-1-proteinase inhibitor</fullName>
    </alternativeName>
</protein>
<feature type="signal peptide" evidence="4">
    <location>
        <begin position="1"/>
        <end position="24"/>
    </location>
</feature>
<feature type="chain" id="PRO_0000032399" description="Alpha-1-antiproteinase">
    <location>
        <begin position="25"/>
        <end position="416"/>
    </location>
</feature>
<feature type="region of interest" description="RCL">
    <location>
        <begin position="371"/>
        <end position="390"/>
    </location>
</feature>
<feature type="site" description="Reactive bond">
    <location>
        <begin position="380"/>
        <end position="381"/>
    </location>
</feature>
<feature type="modified residue" description="Phosphoserine" evidence="2">
    <location>
        <position position="381"/>
    </location>
</feature>
<feature type="glycosylation site" description="N-linked (GlcNAc...) asparagine" evidence="3">
    <location>
        <position position="68"/>
    </location>
</feature>
<feature type="glycosylation site" description="N-linked (GlcNAc...) asparagine" evidence="3">
    <location>
        <position position="105"/>
    </location>
</feature>
<feature type="glycosylation site" description="N-linked (GlcNAc...) asparagine" evidence="3">
    <location>
        <position position="143"/>
    </location>
</feature>
<feature type="glycosylation site" description="N-linked (GlcNAc...) asparagine" evidence="3">
    <location>
        <position position="269"/>
    </location>
</feature>
<feature type="sequence conflict" description="In Ref. 2; AA sequence." evidence="5" ref="2">
    <original>A</original>
    <variation>S</variation>
    <location>
        <position position="39"/>
    </location>
</feature>
<feature type="sequence conflict" description="In Ref. 2; AA sequence." evidence="5" ref="2">
    <original>C</original>
    <variation>A</variation>
    <location>
        <position position="45"/>
    </location>
</feature>
<accession>P12725</accession>
<name>A1AT_SHEEP</name>
<sequence length="416" mass="45985">MALSITRGLLLLAALCCLAPTSLAGVLQGHAVQETDDTAHQEAACHKIAPNLANFAFSIYHKLAHQSNTSNIFFSPVSIASAFAMLSLGAKGNTHTEILEGLGFNLTELAEAEIHKGFQHLLHTLNQPNHQLQLTTGNGLFINESAKLVDTFLEDVKNLHHSKAFSINFRDAEEAKKKINDYVEKGSHGKIVDLVKDLDQDTVFALVNYISFKGKWEKPFEVEHTTERDFHVNEQTTVKVPMMNRLGMFDLHYCDKLASWVLLLDYVGNVTACFILPDLGKLQQLEDKLNNELLAKFLEKKYASSANLHLPKLSISETYDLKTVLGELGINRVFSNGADLSGITEEQPLMVSKALHKAALTIDEKGTEAAGATFLEAIPMSLPPDVEFNRPFLCILYDRNTKSPLFVGKVVNPTQA</sequence>
<organism>
    <name type="scientific">Ovis aries</name>
    <name type="common">Sheep</name>
    <dbReference type="NCBI Taxonomy" id="9940"/>
    <lineage>
        <taxon>Eukaryota</taxon>
        <taxon>Metazoa</taxon>
        <taxon>Chordata</taxon>
        <taxon>Craniata</taxon>
        <taxon>Vertebrata</taxon>
        <taxon>Euteleostomi</taxon>
        <taxon>Mammalia</taxon>
        <taxon>Eutheria</taxon>
        <taxon>Laurasiatheria</taxon>
        <taxon>Artiodactyla</taxon>
        <taxon>Ruminantia</taxon>
        <taxon>Pecora</taxon>
        <taxon>Bovidae</taxon>
        <taxon>Caprinae</taxon>
        <taxon>Ovis</taxon>
    </lineage>
</organism>